<accession>P0C9Q0</accession>
<gene>
    <name type="ordered locus">Ken-036</name>
</gene>
<feature type="chain" id="PRO_0000373281" description="Protein MGF 360-12L">
    <location>
        <begin position="1"/>
        <end position="351"/>
    </location>
</feature>
<feature type="repeat" description="ANK">
    <location>
        <begin position="57"/>
        <end position="89"/>
    </location>
</feature>
<dbReference type="EMBL" id="AY261360">
    <property type="status" value="NOT_ANNOTATED_CDS"/>
    <property type="molecule type" value="Genomic_DNA"/>
</dbReference>
<dbReference type="SMR" id="P0C9Q0"/>
<dbReference type="Proteomes" id="UP000000861">
    <property type="component" value="Segment"/>
</dbReference>
<dbReference type="GO" id="GO:0042330">
    <property type="term" value="P:taxis"/>
    <property type="evidence" value="ECO:0007669"/>
    <property type="project" value="InterPro"/>
</dbReference>
<dbReference type="InterPro" id="IPR002595">
    <property type="entry name" value="ASFV_MGF360"/>
</dbReference>
<dbReference type="Pfam" id="PF01671">
    <property type="entry name" value="ASFV_360"/>
    <property type="match status" value="1"/>
</dbReference>
<sequence length="351" mass="41088">MLPSLQSLTKKVLAGQCLPEDQHYLLKCYDLWWNNAPITFDHNLRLIKSAGLQEGLDLNMALVKAVKENNYSLIKLFTEWGANINYGLISVNTEHTWDLCRELGAKKTLNEGDILQIFIDLKFHKTSSNIILCHEVFSDNLLLKKVNNLKMRIEIFWELREIIEKTDLLNNEFSLNTLLLKYWYAIAVRYNLKEAIQYFYQKYTHLNTWRLTCALCFNNVFDLHEAYEKDKICMDLEEMMRIACIKDHSLSTIYYCYMLGANINQAMLTSIQYYNIENIFFCMDLGADAFEEGMALVGQEGYEPIRNILSLKIYSPATTPLPKSTDPEIIDHELKNYFSKNMMVFLTYDLR</sequence>
<proteinExistence type="inferred from homology"/>
<organismHost>
    <name type="scientific">Ornithodoros</name>
    <name type="common">relapsing fever ticks</name>
    <dbReference type="NCBI Taxonomy" id="6937"/>
</organismHost>
<organismHost>
    <name type="scientific">Phacochoerus aethiopicus</name>
    <name type="common">Warthog</name>
    <dbReference type="NCBI Taxonomy" id="85517"/>
</organismHost>
<organismHost>
    <name type="scientific">Phacochoerus africanus</name>
    <name type="common">Warthog</name>
    <dbReference type="NCBI Taxonomy" id="41426"/>
</organismHost>
<organismHost>
    <name type="scientific">Potamochoerus larvatus</name>
    <name type="common">Bushpig</name>
    <dbReference type="NCBI Taxonomy" id="273792"/>
</organismHost>
<organismHost>
    <name type="scientific">Sus scrofa</name>
    <name type="common">Pig</name>
    <dbReference type="NCBI Taxonomy" id="9823"/>
</organismHost>
<keyword id="KW-0040">ANK repeat</keyword>
<reference key="1">
    <citation type="submission" date="2003-03" db="EMBL/GenBank/DDBJ databases">
        <title>African swine fever virus genomes.</title>
        <authorList>
            <person name="Kutish G.F."/>
            <person name="Rock D.L."/>
        </authorList>
    </citation>
    <scope>NUCLEOTIDE SEQUENCE [LARGE SCALE GENOMIC DNA]</scope>
</reference>
<evidence type="ECO:0000250" key="1"/>
<evidence type="ECO:0000305" key="2"/>
<comment type="function">
    <text evidence="1">Plays a role in virus cell tropism, and may be required for efficient virus replication in macrophages.</text>
</comment>
<comment type="similarity">
    <text evidence="2">Belongs to the asfivirus MGF 360 family.</text>
</comment>
<name>36012_ASFK5</name>
<organism>
    <name type="scientific">African swine fever virus (isolate Pig/Kenya/KEN-50/1950)</name>
    <name type="common">ASFV</name>
    <dbReference type="NCBI Taxonomy" id="561445"/>
    <lineage>
        <taxon>Viruses</taxon>
        <taxon>Varidnaviria</taxon>
        <taxon>Bamfordvirae</taxon>
        <taxon>Nucleocytoviricota</taxon>
        <taxon>Pokkesviricetes</taxon>
        <taxon>Asfuvirales</taxon>
        <taxon>Asfarviridae</taxon>
        <taxon>Asfivirus</taxon>
        <taxon>African swine fever virus</taxon>
    </lineage>
</organism>
<protein>
    <recommendedName>
        <fullName>Protein MGF 360-12L</fullName>
    </recommendedName>
</protein>